<reference key="1">
    <citation type="submission" date="1997-07" db="EMBL/GenBank/DDBJ databases">
        <title>Sequence analysis of the mobA-ampS region of the Bacillus subtilis chromosome.</title>
        <authorList>
            <person name="Caldwell R.M."/>
            <person name="Ferrari E."/>
        </authorList>
    </citation>
    <scope>NUCLEOTIDE SEQUENCE [GENOMIC DNA]</scope>
</reference>
<reference key="2">
    <citation type="journal article" date="1997" name="Nature">
        <title>The complete genome sequence of the Gram-positive bacterium Bacillus subtilis.</title>
        <authorList>
            <person name="Kunst F."/>
            <person name="Ogasawara N."/>
            <person name="Moszer I."/>
            <person name="Albertini A.M."/>
            <person name="Alloni G."/>
            <person name="Azevedo V."/>
            <person name="Bertero M.G."/>
            <person name="Bessieres P."/>
            <person name="Bolotin A."/>
            <person name="Borchert S."/>
            <person name="Borriss R."/>
            <person name="Boursier L."/>
            <person name="Brans A."/>
            <person name="Braun M."/>
            <person name="Brignell S.C."/>
            <person name="Bron S."/>
            <person name="Brouillet S."/>
            <person name="Bruschi C.V."/>
            <person name="Caldwell B."/>
            <person name="Capuano V."/>
            <person name="Carter N.M."/>
            <person name="Choi S.-K."/>
            <person name="Codani J.-J."/>
            <person name="Connerton I.F."/>
            <person name="Cummings N.J."/>
            <person name="Daniel R.A."/>
            <person name="Denizot F."/>
            <person name="Devine K.M."/>
            <person name="Duesterhoeft A."/>
            <person name="Ehrlich S.D."/>
            <person name="Emmerson P.T."/>
            <person name="Entian K.-D."/>
            <person name="Errington J."/>
            <person name="Fabret C."/>
            <person name="Ferrari E."/>
            <person name="Foulger D."/>
            <person name="Fritz C."/>
            <person name="Fujita M."/>
            <person name="Fujita Y."/>
            <person name="Fuma S."/>
            <person name="Galizzi A."/>
            <person name="Galleron N."/>
            <person name="Ghim S.-Y."/>
            <person name="Glaser P."/>
            <person name="Goffeau A."/>
            <person name="Golightly E.J."/>
            <person name="Grandi G."/>
            <person name="Guiseppi G."/>
            <person name="Guy B.J."/>
            <person name="Haga K."/>
            <person name="Haiech J."/>
            <person name="Harwood C.R."/>
            <person name="Henaut A."/>
            <person name="Hilbert H."/>
            <person name="Holsappel S."/>
            <person name="Hosono S."/>
            <person name="Hullo M.-F."/>
            <person name="Itaya M."/>
            <person name="Jones L.-M."/>
            <person name="Joris B."/>
            <person name="Karamata D."/>
            <person name="Kasahara Y."/>
            <person name="Klaerr-Blanchard M."/>
            <person name="Klein C."/>
            <person name="Kobayashi Y."/>
            <person name="Koetter P."/>
            <person name="Koningstein G."/>
            <person name="Krogh S."/>
            <person name="Kumano M."/>
            <person name="Kurita K."/>
            <person name="Lapidus A."/>
            <person name="Lardinois S."/>
            <person name="Lauber J."/>
            <person name="Lazarevic V."/>
            <person name="Lee S.-M."/>
            <person name="Levine A."/>
            <person name="Liu H."/>
            <person name="Masuda S."/>
            <person name="Mauel C."/>
            <person name="Medigue C."/>
            <person name="Medina N."/>
            <person name="Mellado R.P."/>
            <person name="Mizuno M."/>
            <person name="Moestl D."/>
            <person name="Nakai S."/>
            <person name="Noback M."/>
            <person name="Noone D."/>
            <person name="O'Reilly M."/>
            <person name="Ogawa K."/>
            <person name="Ogiwara A."/>
            <person name="Oudega B."/>
            <person name="Park S.-H."/>
            <person name="Parro V."/>
            <person name="Pohl T.M."/>
            <person name="Portetelle D."/>
            <person name="Porwollik S."/>
            <person name="Prescott A.M."/>
            <person name="Presecan E."/>
            <person name="Pujic P."/>
            <person name="Purnelle B."/>
            <person name="Rapoport G."/>
            <person name="Rey M."/>
            <person name="Reynolds S."/>
            <person name="Rieger M."/>
            <person name="Rivolta C."/>
            <person name="Rocha E."/>
            <person name="Roche B."/>
            <person name="Rose M."/>
            <person name="Sadaie Y."/>
            <person name="Sato T."/>
            <person name="Scanlan E."/>
            <person name="Schleich S."/>
            <person name="Schroeter R."/>
            <person name="Scoffone F."/>
            <person name="Sekiguchi J."/>
            <person name="Sekowska A."/>
            <person name="Seror S.J."/>
            <person name="Serror P."/>
            <person name="Shin B.-S."/>
            <person name="Soldo B."/>
            <person name="Sorokin A."/>
            <person name="Tacconi E."/>
            <person name="Takagi T."/>
            <person name="Takahashi H."/>
            <person name="Takemaru K."/>
            <person name="Takeuchi M."/>
            <person name="Tamakoshi A."/>
            <person name="Tanaka T."/>
            <person name="Terpstra P."/>
            <person name="Tognoni A."/>
            <person name="Tosato V."/>
            <person name="Uchiyama S."/>
            <person name="Vandenbol M."/>
            <person name="Vannier F."/>
            <person name="Vassarotti A."/>
            <person name="Viari A."/>
            <person name="Wambutt R."/>
            <person name="Wedler E."/>
            <person name="Wedler H."/>
            <person name="Weitzenegger T."/>
            <person name="Winters P."/>
            <person name="Wipat A."/>
            <person name="Yamamoto H."/>
            <person name="Yamane K."/>
            <person name="Yasumoto K."/>
            <person name="Yata K."/>
            <person name="Yoshida K."/>
            <person name="Yoshikawa H.-F."/>
            <person name="Zumstein E."/>
            <person name="Yoshikawa H."/>
            <person name="Danchin A."/>
        </authorList>
    </citation>
    <scope>NUCLEOTIDE SEQUENCE [LARGE SCALE GENOMIC DNA]</scope>
    <source>
        <strain>168</strain>
    </source>
</reference>
<evidence type="ECO:0000250" key="1"/>
<evidence type="ECO:0000305" key="2"/>
<feature type="chain" id="PRO_0000163078" description="Molybdopterin synthase catalytic subunit">
    <location>
        <begin position="1"/>
        <end position="157"/>
    </location>
</feature>
<feature type="binding site" evidence="1">
    <location>
        <begin position="34"/>
        <end position="36"/>
    </location>
    <ligand>
        <name>substrate</name>
    </ligand>
</feature>
<feature type="binding site" evidence="1">
    <location>
        <position position="44"/>
    </location>
    <ligand>
        <name>substrate</name>
    </ligand>
</feature>
<feature type="binding site" evidence="1">
    <location>
        <begin position="100"/>
        <end position="101"/>
    </location>
    <ligand>
        <name>substrate</name>
    </ligand>
</feature>
<feature type="binding site" evidence="1">
    <location>
        <position position="116"/>
    </location>
    <ligand>
        <name>substrate</name>
    </ligand>
</feature>
<feature type="binding site" evidence="1">
    <location>
        <begin position="123"/>
        <end position="125"/>
    </location>
    <ligand>
        <name>substrate</name>
    </ligand>
</feature>
<accession>O31705</accession>
<organism>
    <name type="scientific">Bacillus subtilis (strain 168)</name>
    <dbReference type="NCBI Taxonomy" id="224308"/>
    <lineage>
        <taxon>Bacteria</taxon>
        <taxon>Bacillati</taxon>
        <taxon>Bacillota</taxon>
        <taxon>Bacilli</taxon>
        <taxon>Bacillales</taxon>
        <taxon>Bacillaceae</taxon>
        <taxon>Bacillus</taxon>
    </lineage>
</organism>
<sequence length="157" mass="17782">MERFEITKTPINTENIIKKVEKREAGAITTFIGTVREWTNGKRTVRLEYEAYEPMAVQMLAQIGAEIEEKWEGASAAITHRIGVLDIGEAAVVIAVSSPHRKAAYEANEYAIERIKQIVPIWKKEIWEDGEQWIGDQLETTAYPNGKPDLSEGEQHD</sequence>
<name>MOAE_BACSU</name>
<comment type="function">
    <text evidence="1">Converts molybdopterin precursor Z into molybdopterin. This requires the incorporation of two sulfur atoms into precursor Z to generate a dithiolene group. The sulfur is provided by MoaD (By similarity).</text>
</comment>
<comment type="catalytic activity">
    <reaction>
        <text>2 [molybdopterin-synthase sulfur-carrier protein]-C-terminal-Gly-aminoethanethioate + cyclic pyranopterin phosphate + H2O = molybdopterin + 2 [molybdopterin-synthase sulfur-carrier protein]-C-terminal Gly-Gly + 2 H(+)</text>
        <dbReference type="Rhea" id="RHEA:26333"/>
        <dbReference type="Rhea" id="RHEA-COMP:12202"/>
        <dbReference type="Rhea" id="RHEA-COMP:19907"/>
        <dbReference type="ChEBI" id="CHEBI:15377"/>
        <dbReference type="ChEBI" id="CHEBI:15378"/>
        <dbReference type="ChEBI" id="CHEBI:58698"/>
        <dbReference type="ChEBI" id="CHEBI:59648"/>
        <dbReference type="ChEBI" id="CHEBI:90778"/>
        <dbReference type="ChEBI" id="CHEBI:232372"/>
        <dbReference type="EC" id="2.8.1.12"/>
    </reaction>
</comment>
<comment type="pathway">
    <text>Cofactor biosynthesis; molybdopterin biosynthesis.</text>
</comment>
<comment type="subunit">
    <text evidence="1">Heterotetramer of 2 MoaD subunits and 2 MoaE subunits. Also stable as homodimer. The enzyme changes between these two forms during catalysis (By similarity).</text>
</comment>
<comment type="similarity">
    <text evidence="2">Belongs to the MoaE family.</text>
</comment>
<dbReference type="EC" id="2.8.1.12"/>
<dbReference type="EMBL" id="AF012285">
    <property type="protein sequence ID" value="AAC24904.1"/>
    <property type="molecule type" value="Genomic_DNA"/>
</dbReference>
<dbReference type="EMBL" id="AL009126">
    <property type="protein sequence ID" value="CAB13303.1"/>
    <property type="molecule type" value="Genomic_DNA"/>
</dbReference>
<dbReference type="PIR" id="B69659">
    <property type="entry name" value="B69659"/>
</dbReference>
<dbReference type="RefSeq" id="NP_389313.1">
    <property type="nucleotide sequence ID" value="NC_000964.3"/>
</dbReference>
<dbReference type="RefSeq" id="WP_003232367.1">
    <property type="nucleotide sequence ID" value="NZ_OZ025638.1"/>
</dbReference>
<dbReference type="SMR" id="O31705"/>
<dbReference type="FunCoup" id="O31705">
    <property type="interactions" value="614"/>
</dbReference>
<dbReference type="STRING" id="224308.BSU14300"/>
<dbReference type="jPOST" id="O31705"/>
<dbReference type="PaxDb" id="224308-BSU14300"/>
<dbReference type="EnsemblBacteria" id="CAB13303">
    <property type="protein sequence ID" value="CAB13303"/>
    <property type="gene ID" value="BSU_14300"/>
</dbReference>
<dbReference type="GeneID" id="936092"/>
<dbReference type="KEGG" id="bsu:BSU14300"/>
<dbReference type="PATRIC" id="fig|224308.179.peg.1560"/>
<dbReference type="eggNOG" id="COG0314">
    <property type="taxonomic scope" value="Bacteria"/>
</dbReference>
<dbReference type="InParanoid" id="O31705"/>
<dbReference type="OrthoDB" id="9803224at2"/>
<dbReference type="PhylomeDB" id="O31705"/>
<dbReference type="BioCyc" id="BSUB:BSU14300-MONOMER"/>
<dbReference type="UniPathway" id="UPA00344"/>
<dbReference type="Proteomes" id="UP000001570">
    <property type="component" value="Chromosome"/>
</dbReference>
<dbReference type="GO" id="GO:0005829">
    <property type="term" value="C:cytosol"/>
    <property type="evidence" value="ECO:0000318"/>
    <property type="project" value="GO_Central"/>
</dbReference>
<dbReference type="GO" id="GO:0030366">
    <property type="term" value="F:molybdopterin synthase activity"/>
    <property type="evidence" value="ECO:0007669"/>
    <property type="project" value="UniProtKB-EC"/>
</dbReference>
<dbReference type="GO" id="GO:0006777">
    <property type="term" value="P:Mo-molybdopterin cofactor biosynthetic process"/>
    <property type="evidence" value="ECO:0007669"/>
    <property type="project" value="UniProtKB-KW"/>
</dbReference>
<dbReference type="CDD" id="cd00756">
    <property type="entry name" value="MoaE"/>
    <property type="match status" value="1"/>
</dbReference>
<dbReference type="FunFam" id="3.90.1170.40:FF:000003">
    <property type="entry name" value="Molybdopterin converting factor subunit 2"/>
    <property type="match status" value="1"/>
</dbReference>
<dbReference type="Gene3D" id="3.90.1170.40">
    <property type="entry name" value="Molybdopterin biosynthesis MoaE subunit"/>
    <property type="match status" value="1"/>
</dbReference>
<dbReference type="InterPro" id="IPR036563">
    <property type="entry name" value="MoaE_sf"/>
</dbReference>
<dbReference type="InterPro" id="IPR003448">
    <property type="entry name" value="Mopterin_biosynth_MoaE"/>
</dbReference>
<dbReference type="PANTHER" id="PTHR23404">
    <property type="entry name" value="MOLYBDOPTERIN SYNTHASE RELATED"/>
    <property type="match status" value="1"/>
</dbReference>
<dbReference type="Pfam" id="PF02391">
    <property type="entry name" value="MoaE"/>
    <property type="match status" value="1"/>
</dbReference>
<dbReference type="SUPFAM" id="SSF54690">
    <property type="entry name" value="Molybdopterin synthase subunit MoaE"/>
    <property type="match status" value="1"/>
</dbReference>
<keyword id="KW-0501">Molybdenum cofactor biosynthesis</keyword>
<keyword id="KW-1185">Reference proteome</keyword>
<keyword id="KW-0808">Transferase</keyword>
<gene>
    <name type="primary">moaE</name>
    <name type="ordered locus">BSU14300</name>
</gene>
<protein>
    <recommendedName>
        <fullName>Molybdopterin synthase catalytic subunit</fullName>
        <ecNumber>2.8.1.12</ecNumber>
    </recommendedName>
    <alternativeName>
        <fullName>MPT synthase subunit 2</fullName>
    </alternativeName>
    <alternativeName>
        <fullName>Molybdenum cofactor biosynthesis protein E</fullName>
    </alternativeName>
    <alternativeName>
        <fullName>Molybdopterin-converting factor large subunit</fullName>
    </alternativeName>
    <alternativeName>
        <fullName>Molybdopterin-converting factor subunit 2</fullName>
    </alternativeName>
</protein>
<proteinExistence type="inferred from homology"/>